<organism evidence="3">
    <name type="scientific">Arabidopsis thaliana</name>
    <name type="common">Mouse-ear cress</name>
    <dbReference type="NCBI Taxonomy" id="3702"/>
    <lineage>
        <taxon>Eukaryota</taxon>
        <taxon>Viridiplantae</taxon>
        <taxon>Streptophyta</taxon>
        <taxon>Embryophyta</taxon>
        <taxon>Tracheophyta</taxon>
        <taxon>Spermatophyta</taxon>
        <taxon>Magnoliopsida</taxon>
        <taxon>eudicotyledons</taxon>
        <taxon>Gunneridae</taxon>
        <taxon>Pentapetalae</taxon>
        <taxon>rosids</taxon>
        <taxon>malvids</taxon>
        <taxon>Brassicales</taxon>
        <taxon>Brassicaceae</taxon>
        <taxon>Camelineae</taxon>
        <taxon>Arabidopsis</taxon>
    </lineage>
</organism>
<sequence length="87" mass="9887">MRSITWFIVFCVFMFIALNHVKGQVKPTGCQGGQRYRGKCGTNGTKTCVKDMMLPKLFKTKRCDCQDMLGTFKGWHFCTCYSGRPGC</sequence>
<feature type="signal peptide" evidence="2">
    <location>
        <begin position="1"/>
        <end position="23"/>
    </location>
</feature>
<feature type="chain" id="PRO_0000031942" description="Putative defensin-like protein 238">
    <location>
        <begin position="24"/>
        <end position="87"/>
    </location>
</feature>
<feature type="disulfide bond" evidence="1">
    <location>
        <begin position="30"/>
        <end position="87"/>
    </location>
</feature>
<feature type="disulfide bond" evidence="1">
    <location>
        <begin position="40"/>
        <end position="65"/>
    </location>
</feature>
<feature type="disulfide bond" evidence="1">
    <location>
        <begin position="48"/>
        <end position="78"/>
    </location>
</feature>
<feature type="disulfide bond" evidence="1">
    <location>
        <begin position="63"/>
        <end position="80"/>
    </location>
</feature>
<protein>
    <recommendedName>
        <fullName>Putative defensin-like protein 238</fullName>
    </recommendedName>
    <alternativeName>
        <fullName>Putative S locus cysteine-rich-like protein 16</fullName>
        <shortName>Protein SCRL16</shortName>
        <shortName>SCR-like protein 16</shortName>
    </alternativeName>
</protein>
<proteinExistence type="inferred from homology"/>
<keyword id="KW-0929">Antimicrobial</keyword>
<keyword id="KW-1015">Disulfide bond</keyword>
<keyword id="KW-0295">Fungicide</keyword>
<keyword id="KW-0611">Plant defense</keyword>
<keyword id="KW-1185">Reference proteome</keyword>
<keyword id="KW-0964">Secreted</keyword>
<keyword id="KW-0732">Signal</keyword>
<reference evidence="3" key="1">
    <citation type="journal article" date="1999" name="Nature">
        <title>Sequence and analysis of chromosome 2 of the plant Arabidopsis thaliana.</title>
        <authorList>
            <person name="Lin X."/>
            <person name="Kaul S."/>
            <person name="Rounsley S.D."/>
            <person name="Shea T.P."/>
            <person name="Benito M.-I."/>
            <person name="Town C.D."/>
            <person name="Fujii C.Y."/>
            <person name="Mason T.M."/>
            <person name="Bowman C.L."/>
            <person name="Barnstead M.E."/>
            <person name="Feldblyum T.V."/>
            <person name="Buell C.R."/>
            <person name="Ketchum K.A."/>
            <person name="Lee J.J."/>
            <person name="Ronning C.M."/>
            <person name="Koo H.L."/>
            <person name="Moffat K.S."/>
            <person name="Cronin L.A."/>
            <person name="Shen M."/>
            <person name="Pai G."/>
            <person name="Van Aken S."/>
            <person name="Umayam L."/>
            <person name="Tallon L.J."/>
            <person name="Gill J.E."/>
            <person name="Adams M.D."/>
            <person name="Carrera A.J."/>
            <person name="Creasy T.H."/>
            <person name="Goodman H.M."/>
            <person name="Somerville C.R."/>
            <person name="Copenhaver G.P."/>
            <person name="Preuss D."/>
            <person name="Nierman W.C."/>
            <person name="White O."/>
            <person name="Eisen J.A."/>
            <person name="Salzberg S.L."/>
            <person name="Fraser C.M."/>
            <person name="Venter J.C."/>
        </authorList>
    </citation>
    <scope>NUCLEOTIDE SEQUENCE [LARGE SCALE GENOMIC DNA]</scope>
    <source>
        <strain>cv. Columbia</strain>
    </source>
</reference>
<reference key="2">
    <citation type="journal article" date="2017" name="Plant J.">
        <title>Araport11: a complete reannotation of the Arabidopsis thaliana reference genome.</title>
        <authorList>
            <person name="Cheng C.Y."/>
            <person name="Krishnakumar V."/>
            <person name="Chan A.P."/>
            <person name="Thibaud-Nissen F."/>
            <person name="Schobel S."/>
            <person name="Town C.D."/>
        </authorList>
    </citation>
    <scope>GENOME REANNOTATION</scope>
    <source>
        <strain>cv. Columbia</strain>
    </source>
</reference>
<reference evidence="3" key="3">
    <citation type="journal article" date="2001" name="Plant Mol. Biol.">
        <title>Two large Arabidopsis thaliana gene families are homologous to the Brassica gene superfamily that encodes pollen coat proteins and the male component of the self-incompatibility response.</title>
        <authorList>
            <person name="Vanoosthuyse V."/>
            <person name="Miege C."/>
            <person name="Dumas C."/>
            <person name="Cock J.M."/>
        </authorList>
    </citation>
    <scope>IDENTIFICATION</scope>
</reference>
<reference key="4">
    <citation type="journal article" date="2005" name="Plant Physiol.">
        <title>Genome organization of more than 300 defensin-like genes in Arabidopsis.</title>
        <authorList>
            <person name="Silverstein K.A.T."/>
            <person name="Graham M.A."/>
            <person name="Paape T.D."/>
            <person name="VandenBosch K.A."/>
        </authorList>
    </citation>
    <scope>GENE FAMILY</scope>
</reference>
<dbReference type="EMBL" id="AC005171">
    <property type="status" value="NOT_ANNOTATED_CDS"/>
    <property type="molecule type" value="Genomic_DNA"/>
</dbReference>
<dbReference type="EMBL" id="CP002685">
    <property type="protein sequence ID" value="AEC06027.1"/>
    <property type="molecule type" value="Genomic_DNA"/>
</dbReference>
<dbReference type="RefSeq" id="NP_001031342.1">
    <property type="nucleotide sequence ID" value="NM_001036265.2"/>
</dbReference>
<dbReference type="SMR" id="P82635"/>
<dbReference type="PaxDb" id="3702-AT2G06983.1"/>
<dbReference type="ProteomicsDB" id="224650"/>
<dbReference type="EnsemblPlants" id="AT2G06983.1">
    <property type="protein sequence ID" value="AT2G06983.1"/>
    <property type="gene ID" value="AT2G06983"/>
</dbReference>
<dbReference type="GeneID" id="3767747"/>
<dbReference type="Gramene" id="AT2G06983.1">
    <property type="protein sequence ID" value="AT2G06983.1"/>
    <property type="gene ID" value="AT2G06983"/>
</dbReference>
<dbReference type="KEGG" id="ath:AT2G06983"/>
<dbReference type="Araport" id="AT2G06983"/>
<dbReference type="TAIR" id="AT2G06983">
    <property type="gene designation" value="SCRL16"/>
</dbReference>
<dbReference type="HOGENOM" id="CLU_174283_1_0_1"/>
<dbReference type="InParanoid" id="P82635"/>
<dbReference type="PhylomeDB" id="P82635"/>
<dbReference type="PRO" id="PR:P82635"/>
<dbReference type="Proteomes" id="UP000006548">
    <property type="component" value="Chromosome 2"/>
</dbReference>
<dbReference type="ExpressionAtlas" id="P82635">
    <property type="expression patterns" value="baseline"/>
</dbReference>
<dbReference type="GO" id="GO:0005576">
    <property type="term" value="C:extracellular region"/>
    <property type="evidence" value="ECO:0007669"/>
    <property type="project" value="UniProtKB-SubCell"/>
</dbReference>
<dbReference type="GO" id="GO:0050832">
    <property type="term" value="P:defense response to fungus"/>
    <property type="evidence" value="ECO:0007669"/>
    <property type="project" value="UniProtKB-KW"/>
</dbReference>
<dbReference type="GO" id="GO:0031640">
    <property type="term" value="P:killing of cells of another organism"/>
    <property type="evidence" value="ECO:0007669"/>
    <property type="project" value="UniProtKB-KW"/>
</dbReference>
<dbReference type="GO" id="GO:0007165">
    <property type="term" value="P:signal transduction"/>
    <property type="evidence" value="ECO:0007669"/>
    <property type="project" value="InterPro"/>
</dbReference>
<dbReference type="InterPro" id="IPR010682">
    <property type="entry name" value="SCRL"/>
</dbReference>
<dbReference type="PANTHER" id="PTHR34450:SF6">
    <property type="entry name" value="DEFENSIN-LIKE PROTEIN 241-RELATED"/>
    <property type="match status" value="1"/>
</dbReference>
<dbReference type="PANTHER" id="PTHR34450">
    <property type="entry name" value="DEFENSIN-LIKE PROTEIN 245-RELATED"/>
    <property type="match status" value="1"/>
</dbReference>
<dbReference type="Pfam" id="PF06876">
    <property type="entry name" value="SCRL"/>
    <property type="match status" value="1"/>
</dbReference>
<name>DF238_ARATH</name>
<gene>
    <name type="primary">SCRL16</name>
    <name type="ordered locus">At2g06983</name>
    <name type="ORF">T4E14</name>
</gene>
<comment type="subcellular location">
    <subcellularLocation>
        <location evidence="1">Secreted</location>
    </subcellularLocation>
</comment>
<comment type="similarity">
    <text evidence="3">Belongs to the DEFL family.</text>
</comment>
<evidence type="ECO:0000250" key="1"/>
<evidence type="ECO:0000255" key="2"/>
<evidence type="ECO:0000305" key="3"/>
<accession>P82635</accession>